<feature type="chain" id="PRO_0000253202" description="Putative ankyrin repeat protein L897">
    <location>
        <begin position="1"/>
        <end position="322"/>
    </location>
</feature>
<feature type="repeat" description="ANK 1">
    <location>
        <begin position="88"/>
        <end position="117"/>
    </location>
</feature>
<feature type="repeat" description="ANK 2">
    <location>
        <begin position="181"/>
        <end position="210"/>
    </location>
</feature>
<feature type="repeat" description="ANK 3">
    <location>
        <begin position="248"/>
        <end position="277"/>
    </location>
</feature>
<protein>
    <recommendedName>
        <fullName>Putative ankyrin repeat protein L897</fullName>
    </recommendedName>
</protein>
<dbReference type="EMBL" id="AY653733">
    <property type="protein sequence ID" value="AAV51154.1"/>
    <property type="molecule type" value="Genomic_DNA"/>
</dbReference>
<dbReference type="SMR" id="Q5UQY8"/>
<dbReference type="KEGG" id="vg:9925566"/>
<dbReference type="OrthoDB" id="30005at10239"/>
<dbReference type="Proteomes" id="UP000001134">
    <property type="component" value="Genome"/>
</dbReference>
<dbReference type="Gene3D" id="1.25.40.20">
    <property type="entry name" value="Ankyrin repeat-containing domain"/>
    <property type="match status" value="1"/>
</dbReference>
<dbReference type="InterPro" id="IPR002110">
    <property type="entry name" value="Ankyrin_rpt"/>
</dbReference>
<dbReference type="InterPro" id="IPR036770">
    <property type="entry name" value="Ankyrin_rpt-contain_sf"/>
</dbReference>
<dbReference type="Pfam" id="PF12796">
    <property type="entry name" value="Ank_2"/>
    <property type="match status" value="1"/>
</dbReference>
<dbReference type="SUPFAM" id="SSF48403">
    <property type="entry name" value="Ankyrin repeat"/>
    <property type="match status" value="1"/>
</dbReference>
<accession>Q5UQY8</accession>
<reference key="1">
    <citation type="journal article" date="2004" name="Science">
        <title>The 1.2-megabase genome sequence of Mimivirus.</title>
        <authorList>
            <person name="Raoult D."/>
            <person name="Audic S."/>
            <person name="Robert C."/>
            <person name="Abergel C."/>
            <person name="Renesto P."/>
            <person name="Ogata H."/>
            <person name="La Scola B."/>
            <person name="Susan M."/>
            <person name="Claverie J.-M."/>
        </authorList>
    </citation>
    <scope>NUCLEOTIDE SEQUENCE [GENOMIC DNA]</scope>
    <source>
        <strain>Rowbotham-Bradford</strain>
    </source>
</reference>
<proteinExistence type="predicted"/>
<organismHost>
    <name type="scientific">Acanthamoeba polyphaga</name>
    <name type="common">Amoeba</name>
    <dbReference type="NCBI Taxonomy" id="5757"/>
</organismHost>
<organism>
    <name type="scientific">Acanthamoeba polyphaga mimivirus</name>
    <name type="common">APMV</name>
    <dbReference type="NCBI Taxonomy" id="212035"/>
    <lineage>
        <taxon>Viruses</taxon>
        <taxon>Varidnaviria</taxon>
        <taxon>Bamfordvirae</taxon>
        <taxon>Nucleocytoviricota</taxon>
        <taxon>Megaviricetes</taxon>
        <taxon>Imitervirales</taxon>
        <taxon>Mimiviridae</taxon>
        <taxon>Megamimivirinae</taxon>
        <taxon>Mimivirus</taxon>
        <taxon>Mimivirus bradfordmassiliense</taxon>
    </lineage>
</organism>
<sequence>MKIPRINHNDLFAIVIKLRQYIQDNKIDNEINIVDLIDLIDSMIENKTSEIKFDTVTFEIFTDISLIYYTNKISDINIFLDHNFYSRDNEYYTYFALSIGAMDVFKWLISHGFSYDMSKILNYLHKNCGMSIFRKIFDDDFLNMDNSIINNAVKSAYSNEIEEYVDYFIRSNHVVKITRENIIDVIEYAVQINNCDIIKILVKKFIFWANDYRKIFIQAVRNNNFTITKTLLHSIMYRTNKETLIKFNKNEALKYAIMMKNYDMIELLINYNIQTDHVVKYHIEGALDIKNDDHLDKILKYIDEIVCKKCSKKNREVVIIGF</sequence>
<name>YL897_MIMIV</name>
<gene>
    <name type="ordered locus">MIMI_L897</name>
</gene>
<keyword id="KW-0040">ANK repeat</keyword>
<keyword id="KW-1185">Reference proteome</keyword>
<keyword id="KW-0677">Repeat</keyword>